<organism evidence="18">
    <name type="scientific">Drosophila melanogaster</name>
    <name type="common">Fruit fly</name>
    <dbReference type="NCBI Taxonomy" id="7227"/>
    <lineage>
        <taxon>Eukaryota</taxon>
        <taxon>Metazoa</taxon>
        <taxon>Ecdysozoa</taxon>
        <taxon>Arthropoda</taxon>
        <taxon>Hexapoda</taxon>
        <taxon>Insecta</taxon>
        <taxon>Pterygota</taxon>
        <taxon>Neoptera</taxon>
        <taxon>Endopterygota</taxon>
        <taxon>Diptera</taxon>
        <taxon>Brachycera</taxon>
        <taxon>Muscomorpha</taxon>
        <taxon>Ephydroidea</taxon>
        <taxon>Drosophilidae</taxon>
        <taxon>Drosophila</taxon>
        <taxon>Sophophora</taxon>
    </lineage>
</organism>
<evidence type="ECO:0000250" key="1">
    <source>
        <dbReference type="UniProtKB" id="P08473"/>
    </source>
</evidence>
<evidence type="ECO:0000255" key="2"/>
<evidence type="ECO:0000255" key="3">
    <source>
        <dbReference type="PROSITE-ProRule" id="PRU00498"/>
    </source>
</evidence>
<evidence type="ECO:0000255" key="4">
    <source>
        <dbReference type="PROSITE-ProRule" id="PRU01233"/>
    </source>
</evidence>
<evidence type="ECO:0000255" key="5">
    <source>
        <dbReference type="PROSITE-ProRule" id="PRU10095"/>
    </source>
</evidence>
<evidence type="ECO:0000256" key="6">
    <source>
        <dbReference type="SAM" id="MobiDB-lite"/>
    </source>
</evidence>
<evidence type="ECO:0000269" key="7">
    <source>
    </source>
</evidence>
<evidence type="ECO:0000269" key="8">
    <source>
    </source>
</evidence>
<evidence type="ECO:0000269" key="9">
    <source>
    </source>
</evidence>
<evidence type="ECO:0000269" key="10">
    <source>
    </source>
</evidence>
<evidence type="ECO:0000303" key="11">
    <source>
    </source>
</evidence>
<evidence type="ECO:0000305" key="12"/>
<evidence type="ECO:0000305" key="13">
    <source>
    </source>
</evidence>
<evidence type="ECO:0000305" key="14">
    <source>
    </source>
</evidence>
<evidence type="ECO:0000312" key="15">
    <source>
        <dbReference type="EMBL" id="AAD34741.1"/>
    </source>
</evidence>
<evidence type="ECO:0000312" key="16">
    <source>
        <dbReference type="EMBL" id="ADB91418.1"/>
    </source>
</evidence>
<evidence type="ECO:0000312" key="17">
    <source>
        <dbReference type="FlyBase" id="FBgn0027570"/>
    </source>
</evidence>
<evidence type="ECO:0000312" key="18">
    <source>
        <dbReference type="Proteomes" id="UP000000803"/>
    </source>
</evidence>
<dbReference type="EC" id="3.4.24.11" evidence="7 8"/>
<dbReference type="EMBL" id="AE014297">
    <property type="protein sequence ID" value="AAF52100.1"/>
    <property type="molecule type" value="Genomic_DNA"/>
</dbReference>
<dbReference type="EMBL" id="AE014297">
    <property type="protein sequence ID" value="AFH06233.1"/>
    <property type="molecule type" value="Genomic_DNA"/>
</dbReference>
<dbReference type="EMBL" id="AE014297">
    <property type="protein sequence ID" value="AGB95643.1"/>
    <property type="molecule type" value="Genomic_DNA"/>
</dbReference>
<dbReference type="EMBL" id="AF132153">
    <property type="protein sequence ID" value="AAD34741.1"/>
    <property type="molecule type" value="mRNA"/>
</dbReference>
<dbReference type="EMBL" id="BT120170">
    <property type="protein sequence ID" value="ADB91418.1"/>
    <property type="molecule type" value="mRNA"/>
</dbReference>
<dbReference type="RefSeq" id="NP_001246914.1">
    <molecule id="A0A0B4K692-1"/>
    <property type="nucleotide sequence ID" value="NM_001259985.2"/>
</dbReference>
<dbReference type="RefSeq" id="NP_001262260.1">
    <molecule id="A0A0B4K692-2"/>
    <property type="nucleotide sequence ID" value="NM_001275331.1"/>
</dbReference>
<dbReference type="RefSeq" id="NP_524227.1">
    <molecule id="A0A0B4K692-2"/>
    <property type="nucleotide sequence ID" value="NM_079503.4"/>
</dbReference>
<dbReference type="SMR" id="A0A0B4K692"/>
<dbReference type="STRING" id="7227.FBpp0293663"/>
<dbReference type="MEROPS" id="M13.012"/>
<dbReference type="GlyCosmos" id="A0A0B4K692">
    <property type="glycosylation" value="8 sites, No reported glycans"/>
</dbReference>
<dbReference type="GlyGen" id="A0A0B4K692">
    <property type="glycosylation" value="8 sites"/>
</dbReference>
<dbReference type="PaxDb" id="7227-FBpp0293663"/>
<dbReference type="DNASU" id="40588"/>
<dbReference type="EnsemblMetazoa" id="FBtr0078891">
    <molecule id="A0A0B4K692-2"/>
    <property type="protein sequence ID" value="FBpp0078531"/>
    <property type="gene ID" value="FBgn0027570"/>
</dbReference>
<dbReference type="EnsemblMetazoa" id="FBtr0305133">
    <molecule id="A0A0B4K692-1"/>
    <property type="protein sequence ID" value="FBpp0293663"/>
    <property type="gene ID" value="FBgn0027570"/>
</dbReference>
<dbReference type="EnsemblMetazoa" id="FBtr0333922">
    <molecule id="A0A0B4K692-2"/>
    <property type="protein sequence ID" value="FBpp0306050"/>
    <property type="gene ID" value="FBgn0027570"/>
</dbReference>
<dbReference type="GeneID" id="40588"/>
<dbReference type="KEGG" id="dme:Dmel_CG9761"/>
<dbReference type="UCSC" id="CG9761-RA">
    <property type="organism name" value="d. melanogaster"/>
</dbReference>
<dbReference type="AGR" id="FB:FBgn0027570"/>
<dbReference type="CTD" id="40588"/>
<dbReference type="FlyBase" id="FBgn0027570">
    <property type="gene designation" value="Nep2"/>
</dbReference>
<dbReference type="VEuPathDB" id="VectorBase:FBgn0027570"/>
<dbReference type="eggNOG" id="KOG3624">
    <property type="taxonomic scope" value="Eukaryota"/>
</dbReference>
<dbReference type="InParanoid" id="A0A0B4K692"/>
<dbReference type="OMA" id="STMATHI"/>
<dbReference type="OrthoDB" id="6475849at2759"/>
<dbReference type="PhylomeDB" id="A0A0B4K692"/>
<dbReference type="BRENDA" id="3.4.24.B14">
    <property type="organism ID" value="1994"/>
</dbReference>
<dbReference type="Reactome" id="R-DME-2022377">
    <property type="pathway name" value="Metabolism of Angiotensinogen to Angiotensins"/>
</dbReference>
<dbReference type="Reactome" id="R-DME-5578768">
    <property type="pathway name" value="Physiological factors"/>
</dbReference>
<dbReference type="Reactome" id="R-DME-6798695">
    <property type="pathway name" value="Neutrophil degranulation"/>
</dbReference>
<dbReference type="BioGRID-ORCS" id="40588">
    <property type="hits" value="0 hits in 1 CRISPR screen"/>
</dbReference>
<dbReference type="ChiTaRS" id="Nep2">
    <property type="organism name" value="fly"/>
</dbReference>
<dbReference type="GenomeRNAi" id="40588"/>
<dbReference type="PRO" id="PR:A0A0B4K692"/>
<dbReference type="Proteomes" id="UP000000803">
    <property type="component" value="Chromosome 3R"/>
</dbReference>
<dbReference type="Bgee" id="FBgn0027570">
    <property type="expression patterns" value="Expressed in spermathecum and 118 other cell types or tissues"/>
</dbReference>
<dbReference type="ExpressionAtlas" id="A0A0B4K692">
    <property type="expression patterns" value="baseline and differential"/>
</dbReference>
<dbReference type="GO" id="GO:0005615">
    <property type="term" value="C:extracellular space"/>
    <property type="evidence" value="ECO:0000314"/>
    <property type="project" value="FlyBase"/>
</dbReference>
<dbReference type="GO" id="GO:0016020">
    <property type="term" value="C:membrane"/>
    <property type="evidence" value="ECO:0000255"/>
    <property type="project" value="FlyBase"/>
</dbReference>
<dbReference type="GO" id="GO:0005886">
    <property type="term" value="C:plasma membrane"/>
    <property type="evidence" value="ECO:0007005"/>
    <property type="project" value="FlyBase"/>
</dbReference>
<dbReference type="GO" id="GO:0004175">
    <property type="term" value="F:endopeptidase activity"/>
    <property type="evidence" value="ECO:0000314"/>
    <property type="project" value="FlyBase"/>
</dbReference>
<dbReference type="GO" id="GO:0046872">
    <property type="term" value="F:metal ion binding"/>
    <property type="evidence" value="ECO:0007669"/>
    <property type="project" value="UniProtKB-KW"/>
</dbReference>
<dbReference type="GO" id="GO:0004222">
    <property type="term" value="F:metalloendopeptidase activity"/>
    <property type="evidence" value="ECO:0000315"/>
    <property type="project" value="FlyBase"/>
</dbReference>
<dbReference type="GO" id="GO:0008237">
    <property type="term" value="F:metallopeptidase activity"/>
    <property type="evidence" value="ECO:0000255"/>
    <property type="project" value="FlyBase"/>
</dbReference>
<dbReference type="GO" id="GO:0016485">
    <property type="term" value="P:protein processing"/>
    <property type="evidence" value="ECO:0000318"/>
    <property type="project" value="GO_Central"/>
</dbReference>
<dbReference type="GO" id="GO:0006508">
    <property type="term" value="P:proteolysis"/>
    <property type="evidence" value="ECO:0000314"/>
    <property type="project" value="FlyBase"/>
</dbReference>
<dbReference type="GO" id="GO:0046692">
    <property type="term" value="P:sperm competition"/>
    <property type="evidence" value="ECO:0000315"/>
    <property type="project" value="FlyBase"/>
</dbReference>
<dbReference type="CDD" id="cd08662">
    <property type="entry name" value="M13"/>
    <property type="match status" value="1"/>
</dbReference>
<dbReference type="Gene3D" id="3.40.390.10">
    <property type="entry name" value="Collagenase (Catalytic Domain)"/>
    <property type="match status" value="1"/>
</dbReference>
<dbReference type="Gene3D" id="1.10.1380.10">
    <property type="entry name" value="Neutral endopeptidase , domain2"/>
    <property type="match status" value="1"/>
</dbReference>
<dbReference type="InterPro" id="IPR024079">
    <property type="entry name" value="MetalloPept_cat_dom_sf"/>
</dbReference>
<dbReference type="InterPro" id="IPR000718">
    <property type="entry name" value="Peptidase_M13"/>
</dbReference>
<dbReference type="InterPro" id="IPR018497">
    <property type="entry name" value="Peptidase_M13_C"/>
</dbReference>
<dbReference type="InterPro" id="IPR042089">
    <property type="entry name" value="Peptidase_M13_dom_2"/>
</dbReference>
<dbReference type="InterPro" id="IPR008753">
    <property type="entry name" value="Peptidase_M13_N"/>
</dbReference>
<dbReference type="PANTHER" id="PTHR11733:SF224">
    <property type="entry name" value="NEPRILYSIN-2"/>
    <property type="match status" value="1"/>
</dbReference>
<dbReference type="PANTHER" id="PTHR11733">
    <property type="entry name" value="ZINC METALLOPROTEASE FAMILY M13 NEPRILYSIN-RELATED"/>
    <property type="match status" value="1"/>
</dbReference>
<dbReference type="Pfam" id="PF01431">
    <property type="entry name" value="Peptidase_M13"/>
    <property type="match status" value="1"/>
</dbReference>
<dbReference type="Pfam" id="PF05649">
    <property type="entry name" value="Peptidase_M13_N"/>
    <property type="match status" value="1"/>
</dbReference>
<dbReference type="PRINTS" id="PR00786">
    <property type="entry name" value="NEPRILYSIN"/>
</dbReference>
<dbReference type="SUPFAM" id="SSF55486">
    <property type="entry name" value="Metalloproteases ('zincins'), catalytic domain"/>
    <property type="match status" value="1"/>
</dbReference>
<dbReference type="PROSITE" id="PS51885">
    <property type="entry name" value="NEPRILYSIN"/>
    <property type="match status" value="1"/>
</dbReference>
<dbReference type="PROSITE" id="PS00142">
    <property type="entry name" value="ZINC_PROTEASE"/>
    <property type="match status" value="1"/>
</dbReference>
<gene>
    <name evidence="11 17" type="primary">Nep2</name>
    <name evidence="17" type="ORF">CG9761</name>
</gene>
<reference evidence="18" key="1">
    <citation type="journal article" date="2000" name="Science">
        <title>The genome sequence of Drosophila melanogaster.</title>
        <authorList>
            <person name="Adams M.D."/>
            <person name="Celniker S.E."/>
            <person name="Holt R.A."/>
            <person name="Evans C.A."/>
            <person name="Gocayne J.D."/>
            <person name="Amanatides P.G."/>
            <person name="Scherer S.E."/>
            <person name="Li P.W."/>
            <person name="Hoskins R.A."/>
            <person name="Galle R.F."/>
            <person name="George R.A."/>
            <person name="Lewis S.E."/>
            <person name="Richards S."/>
            <person name="Ashburner M."/>
            <person name="Henderson S.N."/>
            <person name="Sutton G.G."/>
            <person name="Wortman J.R."/>
            <person name="Yandell M.D."/>
            <person name="Zhang Q."/>
            <person name="Chen L.X."/>
            <person name="Brandon R.C."/>
            <person name="Rogers Y.-H.C."/>
            <person name="Blazej R.G."/>
            <person name="Champe M."/>
            <person name="Pfeiffer B.D."/>
            <person name="Wan K.H."/>
            <person name="Doyle C."/>
            <person name="Baxter E.G."/>
            <person name="Helt G."/>
            <person name="Nelson C.R."/>
            <person name="Miklos G.L.G."/>
            <person name="Abril J.F."/>
            <person name="Agbayani A."/>
            <person name="An H.-J."/>
            <person name="Andrews-Pfannkoch C."/>
            <person name="Baldwin D."/>
            <person name="Ballew R.M."/>
            <person name="Basu A."/>
            <person name="Baxendale J."/>
            <person name="Bayraktaroglu L."/>
            <person name="Beasley E.M."/>
            <person name="Beeson K.Y."/>
            <person name="Benos P.V."/>
            <person name="Berman B.P."/>
            <person name="Bhandari D."/>
            <person name="Bolshakov S."/>
            <person name="Borkova D."/>
            <person name="Botchan M.R."/>
            <person name="Bouck J."/>
            <person name="Brokstein P."/>
            <person name="Brottier P."/>
            <person name="Burtis K.C."/>
            <person name="Busam D.A."/>
            <person name="Butler H."/>
            <person name="Cadieu E."/>
            <person name="Center A."/>
            <person name="Chandra I."/>
            <person name="Cherry J.M."/>
            <person name="Cawley S."/>
            <person name="Dahlke C."/>
            <person name="Davenport L.B."/>
            <person name="Davies P."/>
            <person name="de Pablos B."/>
            <person name="Delcher A."/>
            <person name="Deng Z."/>
            <person name="Mays A.D."/>
            <person name="Dew I."/>
            <person name="Dietz S.M."/>
            <person name="Dodson K."/>
            <person name="Doup L.E."/>
            <person name="Downes M."/>
            <person name="Dugan-Rocha S."/>
            <person name="Dunkov B.C."/>
            <person name="Dunn P."/>
            <person name="Durbin K.J."/>
            <person name="Evangelista C.C."/>
            <person name="Ferraz C."/>
            <person name="Ferriera S."/>
            <person name="Fleischmann W."/>
            <person name="Fosler C."/>
            <person name="Gabrielian A.E."/>
            <person name="Garg N.S."/>
            <person name="Gelbart W.M."/>
            <person name="Glasser K."/>
            <person name="Glodek A."/>
            <person name="Gong F."/>
            <person name="Gorrell J.H."/>
            <person name="Gu Z."/>
            <person name="Guan P."/>
            <person name="Harris M."/>
            <person name="Harris N.L."/>
            <person name="Harvey D.A."/>
            <person name="Heiman T.J."/>
            <person name="Hernandez J.R."/>
            <person name="Houck J."/>
            <person name="Hostin D."/>
            <person name="Houston K.A."/>
            <person name="Howland T.J."/>
            <person name="Wei M.-H."/>
            <person name="Ibegwam C."/>
            <person name="Jalali M."/>
            <person name="Kalush F."/>
            <person name="Karpen G.H."/>
            <person name="Ke Z."/>
            <person name="Kennison J.A."/>
            <person name="Ketchum K.A."/>
            <person name="Kimmel B.E."/>
            <person name="Kodira C.D."/>
            <person name="Kraft C.L."/>
            <person name="Kravitz S."/>
            <person name="Kulp D."/>
            <person name="Lai Z."/>
            <person name="Lasko P."/>
            <person name="Lei Y."/>
            <person name="Levitsky A.A."/>
            <person name="Li J.H."/>
            <person name="Li Z."/>
            <person name="Liang Y."/>
            <person name="Lin X."/>
            <person name="Liu X."/>
            <person name="Mattei B."/>
            <person name="McIntosh T.C."/>
            <person name="McLeod M.P."/>
            <person name="McPherson D."/>
            <person name="Merkulov G."/>
            <person name="Milshina N.V."/>
            <person name="Mobarry C."/>
            <person name="Morris J."/>
            <person name="Moshrefi A."/>
            <person name="Mount S.M."/>
            <person name="Moy M."/>
            <person name="Murphy B."/>
            <person name="Murphy L."/>
            <person name="Muzny D.M."/>
            <person name="Nelson D.L."/>
            <person name="Nelson D.R."/>
            <person name="Nelson K.A."/>
            <person name="Nixon K."/>
            <person name="Nusskern D.R."/>
            <person name="Pacleb J.M."/>
            <person name="Palazzolo M."/>
            <person name="Pittman G.S."/>
            <person name="Pan S."/>
            <person name="Pollard J."/>
            <person name="Puri V."/>
            <person name="Reese M.G."/>
            <person name="Reinert K."/>
            <person name="Remington K."/>
            <person name="Saunders R.D.C."/>
            <person name="Scheeler F."/>
            <person name="Shen H."/>
            <person name="Shue B.C."/>
            <person name="Siden-Kiamos I."/>
            <person name="Simpson M."/>
            <person name="Skupski M.P."/>
            <person name="Smith T.J."/>
            <person name="Spier E."/>
            <person name="Spradling A.C."/>
            <person name="Stapleton M."/>
            <person name="Strong R."/>
            <person name="Sun E."/>
            <person name="Svirskas R."/>
            <person name="Tector C."/>
            <person name="Turner R."/>
            <person name="Venter E."/>
            <person name="Wang A.H."/>
            <person name="Wang X."/>
            <person name="Wang Z.-Y."/>
            <person name="Wassarman D.A."/>
            <person name="Weinstock G.M."/>
            <person name="Weissenbach J."/>
            <person name="Williams S.M."/>
            <person name="Woodage T."/>
            <person name="Worley K.C."/>
            <person name="Wu D."/>
            <person name="Yang S."/>
            <person name="Yao Q.A."/>
            <person name="Ye J."/>
            <person name="Yeh R.-F."/>
            <person name="Zaveri J.S."/>
            <person name="Zhan M."/>
            <person name="Zhang G."/>
            <person name="Zhao Q."/>
            <person name="Zheng L."/>
            <person name="Zheng X.H."/>
            <person name="Zhong F.N."/>
            <person name="Zhong W."/>
            <person name="Zhou X."/>
            <person name="Zhu S.C."/>
            <person name="Zhu X."/>
            <person name="Smith H.O."/>
            <person name="Gibbs R.A."/>
            <person name="Myers E.W."/>
            <person name="Rubin G.M."/>
            <person name="Venter J.C."/>
        </authorList>
    </citation>
    <scope>NUCLEOTIDE SEQUENCE [LARGE SCALE GENOMIC DNA]</scope>
    <source>
        <strain evidence="18">Berkeley</strain>
    </source>
</reference>
<reference evidence="18" key="2">
    <citation type="journal article" date="2002" name="Genome Biol.">
        <title>Annotation of the Drosophila melanogaster euchromatic genome: a systematic review.</title>
        <authorList>
            <person name="Misra S."/>
            <person name="Crosby M.A."/>
            <person name="Mungall C.J."/>
            <person name="Matthews B.B."/>
            <person name="Campbell K.S."/>
            <person name="Hradecky P."/>
            <person name="Huang Y."/>
            <person name="Kaminker J.S."/>
            <person name="Millburn G.H."/>
            <person name="Prochnik S.E."/>
            <person name="Smith C.D."/>
            <person name="Tupy J.L."/>
            <person name="Whitfield E.J."/>
            <person name="Bayraktaroglu L."/>
            <person name="Berman B.P."/>
            <person name="Bettencourt B.R."/>
            <person name="Celniker S.E."/>
            <person name="de Grey A.D.N.J."/>
            <person name="Drysdale R.A."/>
            <person name="Harris N.L."/>
            <person name="Richter J."/>
            <person name="Russo S."/>
            <person name="Schroeder A.J."/>
            <person name="Shu S.Q."/>
            <person name="Stapleton M."/>
            <person name="Yamada C."/>
            <person name="Ashburner M."/>
            <person name="Gelbart W.M."/>
            <person name="Rubin G.M."/>
            <person name="Lewis S.E."/>
        </authorList>
    </citation>
    <scope>GENOME REANNOTATION</scope>
    <source>
        <strain evidence="18">Berkeley</strain>
    </source>
</reference>
<reference evidence="15" key="3">
    <citation type="journal article" date="2000" name="Science">
        <title>A Drosophila complementary DNA resource.</title>
        <authorList>
            <person name="Rubin G.M."/>
            <person name="Hong L."/>
            <person name="Brokstein P."/>
            <person name="Evans-Holm M."/>
            <person name="Frise E."/>
            <person name="Stapleton M."/>
            <person name="Harvey D.A."/>
        </authorList>
    </citation>
    <scope>NUCLEOTIDE SEQUENCE [LARGE SCALE MRNA] (ISOFORM A)</scope>
    <source>
        <strain evidence="15">Berkeley</strain>
    </source>
</reference>
<reference evidence="16" key="4">
    <citation type="submission" date="2010-01" db="EMBL/GenBank/DDBJ databases">
        <authorList>
            <person name="Carlson J."/>
            <person name="Booth B."/>
            <person name="Frise E."/>
            <person name="Sandler J."/>
            <person name="Wan K."/>
            <person name="Yu C."/>
            <person name="Celniker S."/>
        </authorList>
    </citation>
    <scope>NUCLEOTIDE SEQUENCE [LARGE SCALE MRNA] OF 1-354</scope>
</reference>
<reference evidence="12" key="5">
    <citation type="journal article" date="2005" name="Biochem. J.">
        <title>Drosophila melanogaster NEP2 is a new soluble member of the neprilysin family of endopeptidases with implications for reproduction and renal function.</title>
        <authorList>
            <person name="Thomas J.E."/>
            <person name="Rylett C.M."/>
            <person name="Carhan A."/>
            <person name="Bland N.D."/>
            <person name="Bingham R.J."/>
            <person name="Shirras A.D."/>
            <person name="Turner A.J."/>
            <person name="Isaac R.E."/>
        </authorList>
    </citation>
    <scope>FUNCTION</scope>
    <scope>CATALYTIC ACTIVITY</scope>
    <scope>SUBCELLULAR LOCATION</scope>
    <scope>TISSUE SPECIFICITY</scope>
    <scope>PROTEOLYTIC CLEAVAGE</scope>
</reference>
<reference evidence="12" key="6">
    <citation type="journal article" date="2007" name="Peptides">
        <title>Expression of NEP2, a soluble neprilysin-like endopeptidase, during embryogenesis in Drosophila melanogaster.</title>
        <authorList>
            <person name="Bland N.D."/>
            <person name="Thomas J.E."/>
            <person name="Audsley N."/>
            <person name="Shirras A.D."/>
            <person name="Turner A.J."/>
            <person name="Isaac R.E."/>
        </authorList>
    </citation>
    <scope>FUNCTION</scope>
    <scope>CATALYTIC ACTIVITY</scope>
    <scope>BIOPHYSICOCHEMICAL PROPERTIES</scope>
    <scope>SUBCELLULAR LOCATION</scope>
    <scope>TISSUE SPECIFICITY</scope>
    <scope>PROTEOLYTIC CLEAVAGE</scope>
    <scope>GLYCOSYLATION</scope>
</reference>
<reference evidence="12" key="7">
    <citation type="journal article" date="2014" name="Genetics">
        <title>Neprilysins: an evolutionarily conserved family of metalloproteases that play important roles in reproduction in Drosophila.</title>
        <authorList>
            <person name="Sitnik J.L."/>
            <person name="Francis C."/>
            <person name="Hens K."/>
            <person name="Huybrechts R."/>
            <person name="Wolfner M.F."/>
            <person name="Callaerts P."/>
        </authorList>
    </citation>
    <scope>FUNCTION</scope>
    <scope>TISSUE SPECIFICITY</scope>
    <scope>DISRUPTION PHENOTYPE</scope>
</reference>
<reference evidence="12" key="8">
    <citation type="journal article" date="2016" name="J. Neurosci.">
        <title>Drosophila neprilysins are involved in middle-term and long-term memory.</title>
        <authorList>
            <person name="Turrel O."/>
            <person name="Lampin-Saint-Amaux A."/>
            <person name="Preat T."/>
            <person name="Goguel V."/>
        </authorList>
    </citation>
    <scope>FUNCTION</scope>
    <scope>DISRUPTION PHENOTYPE</scope>
</reference>
<name>NEP2_DROME</name>
<sequence>MQTVIQNPNWWRRRNKLEKSLLVSLGIMFVVLATGFGLWIGKVLRTSPPSNPQATALHGDSTTINQVPTGTASKGKSGDSGDVCLTQECIHTASTVLRKMKPEVEPCDNFYEFACGTYLEEENIPDDKVSISTFSVISDKLQEQLKDIITAERPETEPKHFRLPNLLYKACMNKTLIETLGPEPITRVAERLGGWPLIKGDSWNADDSWTWQEQVKKFRTAGFSMDYIIDFSIGVDLQNSTKRLIDLDQSSLALSREYLVKGFNETLVTAYYKYMVDIAVLFGANRDLAKTELLLSLEFEMALANISWPNEKRRNSSELYNLRTPAQLQAAYPYVQWVDYMNALLPEGLNVAEDEMINLSVPSFFEDLGKLLAKTPKRVIANYMFWRIHGFSVGFLSEEFRKRQLQYATALSGRQEQEARWKECVDIATSSMDEVCEDDFDSLGISVGSLYVGKHFHKDSKANALEMVNEIRNVFNDILDEVNWMDAKTKKEAKLKLHSMATHIGYPDEMLDNEKLAAYYAKLDIDPDKYFESFLGMNIFGTDYSFNKLRLPVNKTDWVRHARPAIVNAFYSSLENSIQFPAGILQGHFFNAQRPKYMNFGAIGYVIGHEITHGFDDQGRQFDVKGNLRDWWHPDTQKAYLAKAKCIIEQYGNYTERATGLNLNGINTQGENIADNGGVKESYIAYRRWAEKHGPEAKLPGLDYTPEQMFWVAAGQTWCAKYRKESLKMRITTGVHSPSEFRVLGSLSNMKDFAKDFHCPEGSPMNPVQKCEVW</sequence>
<keyword id="KW-0025">Alternative splicing</keyword>
<keyword id="KW-1003">Cell membrane</keyword>
<keyword id="KW-1015">Disulfide bond</keyword>
<keyword id="KW-0325">Glycoprotein</keyword>
<keyword id="KW-0378">Hydrolase</keyword>
<keyword id="KW-0472">Membrane</keyword>
<keyword id="KW-0479">Metal-binding</keyword>
<keyword id="KW-0482">Metalloprotease</keyword>
<keyword id="KW-0645">Protease</keyword>
<keyword id="KW-1185">Reference proteome</keyword>
<keyword id="KW-0964">Secreted</keyword>
<keyword id="KW-0735">Signal-anchor</keyword>
<keyword id="KW-0812">Transmembrane</keyword>
<keyword id="KW-1133">Transmembrane helix</keyword>
<keyword id="KW-0862">Zinc</keyword>
<proteinExistence type="evidence at protein level"/>
<protein>
    <recommendedName>
        <fullName evidence="11">Neprilysin-2</fullName>
        <ecNumber evidence="7 8">3.4.24.11</ecNumber>
    </recommendedName>
    <component>
        <recommendedName>
            <fullName evidence="12">Neprilysin-2, soluble form</fullName>
        </recommendedName>
    </component>
</protein>
<accession>A0A0B4K692</accession>
<accession>D3DMK4</accession>
<accession>Q9XZ01</accession>
<feature type="chain" id="PRO_0000441990" description="Neprilysin-2">
    <location>
        <begin position="1"/>
        <end position="774"/>
    </location>
</feature>
<feature type="chain" id="PRO_0000441991" description="Neprilysin-2, soluble form" evidence="12">
    <location>
        <begin status="unknown"/>
        <end position="774"/>
    </location>
</feature>
<feature type="topological domain" description="Cytoplasmic" evidence="12">
    <location>
        <begin position="1"/>
        <end position="20"/>
    </location>
</feature>
<feature type="transmembrane region" description="Helical; Signal-anchor for type II membrane protein" evidence="2">
    <location>
        <begin position="21"/>
        <end position="41"/>
    </location>
</feature>
<feature type="topological domain" description="Extracellular" evidence="12">
    <location>
        <begin position="42"/>
        <end position="774"/>
    </location>
</feature>
<feature type="domain" description="Peptidase M13" evidence="4">
    <location>
        <begin position="83"/>
        <end position="774"/>
    </location>
</feature>
<feature type="region of interest" description="Disordered" evidence="6">
    <location>
        <begin position="50"/>
        <end position="79"/>
    </location>
</feature>
<feature type="compositionally biased region" description="Polar residues" evidence="6">
    <location>
        <begin position="60"/>
        <end position="74"/>
    </location>
</feature>
<feature type="active site" evidence="4 5">
    <location>
        <position position="610"/>
    </location>
</feature>
<feature type="active site" description="Proton donor" evidence="4">
    <location>
        <position position="675"/>
    </location>
</feature>
<feature type="binding site" evidence="4 5">
    <location>
        <position position="609"/>
    </location>
    <ligand>
        <name>Zn(2+)</name>
        <dbReference type="ChEBI" id="CHEBI:29105"/>
        <note>catalytic</note>
    </ligand>
</feature>
<feature type="binding site" evidence="4 5">
    <location>
        <position position="613"/>
    </location>
    <ligand>
        <name>Zn(2+)</name>
        <dbReference type="ChEBI" id="CHEBI:29105"/>
        <note>catalytic</note>
    </ligand>
</feature>
<feature type="binding site" evidence="4">
    <location>
        <position position="671"/>
    </location>
    <ligand>
        <name>Zn(2+)</name>
        <dbReference type="ChEBI" id="CHEBI:29105"/>
        <note>catalytic</note>
    </ligand>
</feature>
<feature type="glycosylation site" description="N-linked (GlcNAc...) asparagine" evidence="3">
    <location>
        <position position="173"/>
    </location>
</feature>
<feature type="glycosylation site" description="N-linked (GlcNAc...) asparagine" evidence="3">
    <location>
        <position position="239"/>
    </location>
</feature>
<feature type="glycosylation site" description="N-linked (GlcNAc...) asparagine" evidence="3">
    <location>
        <position position="264"/>
    </location>
</feature>
<feature type="glycosylation site" description="N-linked (GlcNAc...) asparagine" evidence="3">
    <location>
        <position position="305"/>
    </location>
</feature>
<feature type="glycosylation site" description="N-linked (GlcNAc...) asparagine" evidence="3">
    <location>
        <position position="315"/>
    </location>
</feature>
<feature type="glycosylation site" description="N-linked (GlcNAc...) asparagine" evidence="3">
    <location>
        <position position="358"/>
    </location>
</feature>
<feature type="glycosylation site" description="N-linked (GlcNAc...) asparagine" evidence="3">
    <location>
        <position position="554"/>
    </location>
</feature>
<feature type="glycosylation site" description="N-linked (GlcNAc...) asparagine" evidence="3">
    <location>
        <position position="653"/>
    </location>
</feature>
<feature type="disulfide bond" evidence="4">
    <location>
        <begin position="84"/>
        <end position="89"/>
    </location>
</feature>
<feature type="disulfide bond" evidence="4">
    <location>
        <begin position="107"/>
        <end position="759"/>
    </location>
</feature>
<feature type="disulfide bond" evidence="4">
    <location>
        <begin position="115"/>
        <end position="719"/>
    </location>
</feature>
<feature type="disulfide bond" evidence="4">
    <location>
        <begin position="171"/>
        <end position="424"/>
    </location>
</feature>
<feature type="disulfide bond" evidence="4">
    <location>
        <begin position="646"/>
        <end position="771"/>
    </location>
</feature>
<feature type="splice variant" id="VSP_059155" description="In isoform A.">
    <location>
        <begin position="432"/>
        <end position="442"/>
    </location>
</feature>
<comment type="function">
    <text evidence="7 8 9 10">Metalloendoprotease which cleaves peptides such as tachykinin peptide TK-2 at the amino side of hydrophobic residues (PubMed:15554877, PubMed:17157960). Functions in female fertility, embryogenesis and memory formation (PubMed:24395329, PubMed:27629706). Required in females for normal patterns of egg laying, probably due to its function in sperm retention and preventing sperm displacement by rival ejaculates (PubMed:24395329). Also required for normal patterns of hatching due to its important role in early embryonic development (PubMed:24395329). Required in the dorsal paired medial neurons for the proper formation of middle-term memory (PubMed:27629706). Also required in the mushroom body neurons where it functions redundantly with neprilysins Nep3 and Nep4 in normal long-term memory formation (PubMed:27629706).</text>
</comment>
<comment type="catalytic activity">
    <reaction evidence="7 8">
        <text>Preferential cleavage of polypeptides between hydrophobic residues, particularly with Phe or Tyr at P1'.</text>
        <dbReference type="EC" id="3.4.24.11"/>
    </reaction>
</comment>
<comment type="cofactor">
    <cofactor evidence="1">
        <name>Zn(2+)</name>
        <dbReference type="ChEBI" id="CHEBI:29105"/>
    </cofactor>
    <text evidence="1">Binds 1 zinc ion per subunit.</text>
</comment>
<comment type="biophysicochemical properties">
    <phDependence>
        <text evidence="8">Optimum pH is 7-7.5 at 35 degrees Celsius.</text>
    </phDependence>
</comment>
<comment type="subcellular location">
    <subcellularLocation>
        <location evidence="12">Cell membrane</location>
        <topology evidence="12">Single-pass type II membrane protein</topology>
    </subcellularLocation>
    <subcellularLocation>
        <location evidence="7 8">Secreted</location>
    </subcellularLocation>
    <text evidence="7 8 13 14">A secreted form exists that is probably produced by proteolytic cleavage (Probable). In embryos, adult Malpighian tubules and testes, detected in the soluble fraction but is not detected in the membrane fraction (PubMed:15554877, PubMed:17157960).</text>
</comment>
<comment type="alternative products">
    <event type="alternative splicing"/>
    <isoform>
        <id>A0A0B4K692-1</id>
        <name evidence="17">B</name>
        <sequence type="displayed"/>
    </isoform>
    <isoform>
        <id>A0A0B4K692-2</id>
        <name evidence="17">A</name>
        <name evidence="17">C</name>
        <sequence type="described" ref="VSP_059155"/>
    </isoform>
</comment>
<comment type="tissue specificity">
    <text evidence="7 8 9">Detected in the stellate cells in the main segment and the bar-shaped cells in the initial segment of male and female Malpighian tubules (at protein level) (PubMed:15554877). Expressed in the spermatheca (at protein level) (PubMed:24395329). Expressed in the somatic cyst cells of the testes, with increased expression at the tail end of elongating cysts (PubMed:15554877, PubMed:24395329). Expressed in the ovaries with strong expression in the posterior polar cells and in border cells of stage 8, 9, and 10 follicles (PubMed:24395329). In adults and third-instar larvae, expressed in the brain, ventral ganglion, and stellate cells (PubMed:24395329). Also expressed in the foregut and the imaginal disks (eye, antennal and leg) of third-instar larvae (PubMed:24395329). In stage 17 embryos, expressed in the tracheal system, foregut, hindgut and epidermis (PubMed:24395329). Also expressed in the stellate cell progenitors of the caudal visceral mesoderm in embryos (PubMed:17157960).</text>
</comment>
<comment type="PTM">
    <text evidence="8">N-glycosylated.</text>
</comment>
<comment type="PTM">
    <text evidence="13 14">The soluble form is probably produced by proteolytic cleavage.</text>
</comment>
<comment type="disruption phenotype">
    <text evidence="9 10">RNAi-mediated knockdown in females mated to wild-type males results in laying of fewer eggs due to impaired sperm retention and increased sperm displacement by rival ejaculates (PubMed:24395329). Females also show a reduced hatch rate and only 20% of their progeny reach the adult stage (PubMed:24395329). Unhatched eggs are fertilized but contain a clear polar body rosette instead of an embryo, suggesting that the eggs activate and complete meiosis but then embryogenesis is arrested (PubMed:24395329). Wild-type females mated to males that undergo RNAi-mediated knockdown, display a slight reduction in fertility but lay the same number of eggs and have the same hatch rate as those mated to wild-type males (PubMed:24395329). RNAi-mediated knockdown in the dorsal paired medial neurons impairs middle-term memory (MTM), but has no effect on long-term memory (LTM) formation, normal aversion learning and anesthesia-resistant memory (ARM) (PubMed:27629706). RNAi-mediated knockdown in all mushroom body neurons has no effect on learning, ARM and LTM (PubMed:27629706). However, simultaneous knockdown with Nep3 does impair LTM, and simultaneous knockdown with both Nep3 and Nep4 results in a further reduction in LTM formation (PubMed:27629706). Simultaneous knockdown with only Nep4 has no effect on LTM formation (PubMed:27629706).</text>
</comment>
<comment type="similarity">
    <text evidence="4 12">Belongs to the peptidase M13 family.</text>
</comment>